<name>AROA_STRPM</name>
<proteinExistence type="inferred from homology"/>
<keyword id="KW-0028">Amino-acid biosynthesis</keyword>
<keyword id="KW-0057">Aromatic amino acid biosynthesis</keyword>
<keyword id="KW-0963">Cytoplasm</keyword>
<keyword id="KW-0808">Transferase</keyword>
<dbReference type="EC" id="2.5.1.19" evidence="1"/>
<dbReference type="EMBL" id="CP000056">
    <property type="protein sequence ID" value="AAX72206.1"/>
    <property type="molecule type" value="Genomic_DNA"/>
</dbReference>
<dbReference type="RefSeq" id="WP_002984103.1">
    <property type="nucleotide sequence ID" value="NC_007296.2"/>
</dbReference>
<dbReference type="SMR" id="Q48SV4"/>
<dbReference type="KEGG" id="spb:M28_Spy1093"/>
<dbReference type="HOGENOM" id="CLU_024321_0_1_9"/>
<dbReference type="UniPathway" id="UPA00053">
    <property type="reaction ID" value="UER00089"/>
</dbReference>
<dbReference type="GO" id="GO:0005737">
    <property type="term" value="C:cytoplasm"/>
    <property type="evidence" value="ECO:0007669"/>
    <property type="project" value="UniProtKB-SubCell"/>
</dbReference>
<dbReference type="GO" id="GO:0003866">
    <property type="term" value="F:3-phosphoshikimate 1-carboxyvinyltransferase activity"/>
    <property type="evidence" value="ECO:0007669"/>
    <property type="project" value="UniProtKB-UniRule"/>
</dbReference>
<dbReference type="GO" id="GO:0008652">
    <property type="term" value="P:amino acid biosynthetic process"/>
    <property type="evidence" value="ECO:0007669"/>
    <property type="project" value="UniProtKB-KW"/>
</dbReference>
<dbReference type="GO" id="GO:0009073">
    <property type="term" value="P:aromatic amino acid family biosynthetic process"/>
    <property type="evidence" value="ECO:0007669"/>
    <property type="project" value="UniProtKB-KW"/>
</dbReference>
<dbReference type="GO" id="GO:0009423">
    <property type="term" value="P:chorismate biosynthetic process"/>
    <property type="evidence" value="ECO:0007669"/>
    <property type="project" value="UniProtKB-UniRule"/>
</dbReference>
<dbReference type="CDD" id="cd01556">
    <property type="entry name" value="EPSP_synthase"/>
    <property type="match status" value="1"/>
</dbReference>
<dbReference type="FunFam" id="3.65.10.10:FF:000005">
    <property type="entry name" value="3-phosphoshikimate 1-carboxyvinyltransferase"/>
    <property type="match status" value="1"/>
</dbReference>
<dbReference type="FunFam" id="3.65.10.10:FF:000006">
    <property type="entry name" value="3-phosphoshikimate 1-carboxyvinyltransferase"/>
    <property type="match status" value="1"/>
</dbReference>
<dbReference type="Gene3D" id="3.65.10.10">
    <property type="entry name" value="Enolpyruvate transferase domain"/>
    <property type="match status" value="2"/>
</dbReference>
<dbReference type="HAMAP" id="MF_00210">
    <property type="entry name" value="EPSP_synth"/>
    <property type="match status" value="1"/>
</dbReference>
<dbReference type="InterPro" id="IPR001986">
    <property type="entry name" value="Enolpyruvate_Tfrase_dom"/>
</dbReference>
<dbReference type="InterPro" id="IPR036968">
    <property type="entry name" value="Enolpyruvate_Tfrase_sf"/>
</dbReference>
<dbReference type="InterPro" id="IPR006264">
    <property type="entry name" value="EPSP_synthase"/>
</dbReference>
<dbReference type="InterPro" id="IPR023193">
    <property type="entry name" value="EPSP_synthase_CS"/>
</dbReference>
<dbReference type="InterPro" id="IPR013792">
    <property type="entry name" value="RNA3'P_cycl/enolpyr_Trfase_a/b"/>
</dbReference>
<dbReference type="NCBIfam" id="TIGR01356">
    <property type="entry name" value="aroA"/>
    <property type="match status" value="1"/>
</dbReference>
<dbReference type="PANTHER" id="PTHR21090">
    <property type="entry name" value="AROM/DEHYDROQUINATE SYNTHASE"/>
    <property type="match status" value="1"/>
</dbReference>
<dbReference type="PANTHER" id="PTHR21090:SF5">
    <property type="entry name" value="PENTAFUNCTIONAL AROM POLYPEPTIDE"/>
    <property type="match status" value="1"/>
</dbReference>
<dbReference type="Pfam" id="PF00275">
    <property type="entry name" value="EPSP_synthase"/>
    <property type="match status" value="1"/>
</dbReference>
<dbReference type="PIRSF" id="PIRSF000505">
    <property type="entry name" value="EPSPS"/>
    <property type="match status" value="1"/>
</dbReference>
<dbReference type="SUPFAM" id="SSF55205">
    <property type="entry name" value="EPT/RTPC-like"/>
    <property type="match status" value="1"/>
</dbReference>
<dbReference type="PROSITE" id="PS00104">
    <property type="entry name" value="EPSP_SYNTHASE_1"/>
    <property type="match status" value="1"/>
</dbReference>
<dbReference type="PROSITE" id="PS00885">
    <property type="entry name" value="EPSP_SYNTHASE_2"/>
    <property type="match status" value="1"/>
</dbReference>
<sequence length="427" mass="46269">MKLRTNAGPLQGTIQVPGDKSISHRAVILGAVAKGETRVKGLLKGEDVLSTIQAFRNLGVRIEEKDDQLVIEGQGFQGLTAPCQTLNMGNSGTSMRLIAGLLAGQPFSVKMIGDESLSKRPMDRIVYPLKQMGVEISGETDRQFPPLQLQGNRNLQPITYTLPISSAQVKSAILLAALQAKGTTQVVEKEITRNHTEEMIQQFGGRLIVDGKRITLVGPQQLTAQEITVPGDISSAAFWLVAGLIIPGSELLLKNVGVNPTRTGILEVVEKMGAQIVYEDMNKKEQVTSIRVVYSHLKGTIISGGLIPRLIDELPIIALLATQAQGTTCIKDAQELRVKETDRIQVVTDILNSMGANIKATADGMIIKGPTVLYGANTSTYGDHRIGMMTAIAALLVKQGQVHLDKEEAIMTSYPTFFKDLERLCHD</sequence>
<gene>
    <name evidence="1" type="primary">aroA</name>
    <name type="ordered locus">M28_Spy1093</name>
</gene>
<feature type="chain" id="PRO_1000012496" description="3-phosphoshikimate 1-carboxyvinyltransferase">
    <location>
        <begin position="1"/>
        <end position="427"/>
    </location>
</feature>
<feature type="active site" description="Proton acceptor" evidence="1">
    <location>
        <position position="312"/>
    </location>
</feature>
<feature type="binding site" evidence="1">
    <location>
        <position position="20"/>
    </location>
    <ligand>
        <name>3-phosphoshikimate</name>
        <dbReference type="ChEBI" id="CHEBI:145989"/>
    </ligand>
</feature>
<feature type="binding site" evidence="1">
    <location>
        <position position="20"/>
    </location>
    <ligand>
        <name>phosphoenolpyruvate</name>
        <dbReference type="ChEBI" id="CHEBI:58702"/>
    </ligand>
</feature>
<feature type="binding site" evidence="1">
    <location>
        <position position="21"/>
    </location>
    <ligand>
        <name>3-phosphoshikimate</name>
        <dbReference type="ChEBI" id="CHEBI:145989"/>
    </ligand>
</feature>
<feature type="binding site" evidence="1">
    <location>
        <position position="25"/>
    </location>
    <ligand>
        <name>3-phosphoshikimate</name>
        <dbReference type="ChEBI" id="CHEBI:145989"/>
    </ligand>
</feature>
<feature type="binding site" evidence="1">
    <location>
        <position position="92"/>
    </location>
    <ligand>
        <name>phosphoenolpyruvate</name>
        <dbReference type="ChEBI" id="CHEBI:58702"/>
    </ligand>
</feature>
<feature type="binding site" evidence="1">
    <location>
        <position position="120"/>
    </location>
    <ligand>
        <name>phosphoenolpyruvate</name>
        <dbReference type="ChEBI" id="CHEBI:58702"/>
    </ligand>
</feature>
<feature type="binding site" evidence="1">
    <location>
        <position position="166"/>
    </location>
    <ligand>
        <name>3-phosphoshikimate</name>
        <dbReference type="ChEBI" id="CHEBI:145989"/>
    </ligand>
</feature>
<feature type="binding site" evidence="1">
    <location>
        <position position="168"/>
    </location>
    <ligand>
        <name>3-phosphoshikimate</name>
        <dbReference type="ChEBI" id="CHEBI:145989"/>
    </ligand>
</feature>
<feature type="binding site" evidence="1">
    <location>
        <position position="168"/>
    </location>
    <ligand>
        <name>phosphoenolpyruvate</name>
        <dbReference type="ChEBI" id="CHEBI:58702"/>
    </ligand>
</feature>
<feature type="binding site" evidence="1">
    <location>
        <position position="312"/>
    </location>
    <ligand>
        <name>3-phosphoshikimate</name>
        <dbReference type="ChEBI" id="CHEBI:145989"/>
    </ligand>
</feature>
<feature type="binding site" evidence="1">
    <location>
        <position position="339"/>
    </location>
    <ligand>
        <name>3-phosphoshikimate</name>
        <dbReference type="ChEBI" id="CHEBI:145989"/>
    </ligand>
</feature>
<feature type="binding site" evidence="1">
    <location>
        <position position="343"/>
    </location>
    <ligand>
        <name>phosphoenolpyruvate</name>
        <dbReference type="ChEBI" id="CHEBI:58702"/>
    </ligand>
</feature>
<feature type="binding site" evidence="1">
    <location>
        <position position="385"/>
    </location>
    <ligand>
        <name>phosphoenolpyruvate</name>
        <dbReference type="ChEBI" id="CHEBI:58702"/>
    </ligand>
</feature>
<reference key="1">
    <citation type="journal article" date="2005" name="J. Infect. Dis.">
        <title>Genome sequence of a serotype M28 strain of group A Streptococcus: potential new insights into puerperal sepsis and bacterial disease specificity.</title>
        <authorList>
            <person name="Green N.M."/>
            <person name="Zhang S."/>
            <person name="Porcella S.F."/>
            <person name="Nagiec M.J."/>
            <person name="Barbian K.D."/>
            <person name="Beres S.B."/>
            <person name="Lefebvre R.B."/>
            <person name="Musser J.M."/>
        </authorList>
    </citation>
    <scope>NUCLEOTIDE SEQUENCE [LARGE SCALE GENOMIC DNA]</scope>
    <source>
        <strain>MGAS6180</strain>
    </source>
</reference>
<protein>
    <recommendedName>
        <fullName evidence="1">3-phosphoshikimate 1-carboxyvinyltransferase</fullName>
        <ecNumber evidence="1">2.5.1.19</ecNumber>
    </recommendedName>
    <alternativeName>
        <fullName evidence="1">5-enolpyruvylshikimate-3-phosphate synthase</fullName>
        <shortName evidence="1">EPSP synthase</shortName>
        <shortName evidence="1">EPSPS</shortName>
    </alternativeName>
</protein>
<comment type="function">
    <text evidence="1">Catalyzes the transfer of the enolpyruvyl moiety of phosphoenolpyruvate (PEP) to the 5-hydroxyl of shikimate-3-phosphate (S3P) to produce enolpyruvyl shikimate-3-phosphate and inorganic phosphate.</text>
</comment>
<comment type="catalytic activity">
    <reaction evidence="1">
        <text>3-phosphoshikimate + phosphoenolpyruvate = 5-O-(1-carboxyvinyl)-3-phosphoshikimate + phosphate</text>
        <dbReference type="Rhea" id="RHEA:21256"/>
        <dbReference type="ChEBI" id="CHEBI:43474"/>
        <dbReference type="ChEBI" id="CHEBI:57701"/>
        <dbReference type="ChEBI" id="CHEBI:58702"/>
        <dbReference type="ChEBI" id="CHEBI:145989"/>
        <dbReference type="EC" id="2.5.1.19"/>
    </reaction>
    <physiologicalReaction direction="left-to-right" evidence="1">
        <dbReference type="Rhea" id="RHEA:21257"/>
    </physiologicalReaction>
</comment>
<comment type="pathway">
    <text evidence="1">Metabolic intermediate biosynthesis; chorismate biosynthesis; chorismate from D-erythrose 4-phosphate and phosphoenolpyruvate: step 6/7.</text>
</comment>
<comment type="subunit">
    <text evidence="1">Monomer.</text>
</comment>
<comment type="subcellular location">
    <subcellularLocation>
        <location evidence="1">Cytoplasm</location>
    </subcellularLocation>
</comment>
<comment type="similarity">
    <text evidence="1">Belongs to the EPSP synthase family.</text>
</comment>
<evidence type="ECO:0000255" key="1">
    <source>
        <dbReference type="HAMAP-Rule" id="MF_00210"/>
    </source>
</evidence>
<organism>
    <name type="scientific">Streptococcus pyogenes serotype M28 (strain MGAS6180)</name>
    <dbReference type="NCBI Taxonomy" id="319701"/>
    <lineage>
        <taxon>Bacteria</taxon>
        <taxon>Bacillati</taxon>
        <taxon>Bacillota</taxon>
        <taxon>Bacilli</taxon>
        <taxon>Lactobacillales</taxon>
        <taxon>Streptococcaceae</taxon>
        <taxon>Streptococcus</taxon>
    </lineage>
</organism>
<accession>Q48SV4</accession>